<sequence length="274" mass="31353">MALGNALVEARDRVAWRLNIKVAQQAQKLVYRYATRRLKDDDVVFLNYGYEEDPPMGIPLSESDELNRYSIQLYHSTAAQADVEGKRVLEVGCGHGGGASYLARTFRPATYTGLDLNSDGINFCRRRHNIAGLEFVQGDAQDLPFPDKNFDAVLNVESSHLYPRFDVFLTEVARVLRPGGYFLYTDARPRYDIPEWERALADAPLQMLSQRAINFEVVRGMEKNLDALESVVDRVAPALLRDWIQKYGPARRAYEELRENTTEYRMYCFVKPAE</sequence>
<feature type="chain" id="PRO_0000430256" description="Fatty-acid O-methyltransferase">
    <location>
        <begin position="1"/>
        <end position="274"/>
    </location>
</feature>
<organism>
    <name type="scientific">Mycolicibacterium smegmatis (strain ATCC 700084 / mc(2)155)</name>
    <name type="common">Mycobacterium smegmatis</name>
    <dbReference type="NCBI Taxonomy" id="246196"/>
    <lineage>
        <taxon>Bacteria</taxon>
        <taxon>Bacillati</taxon>
        <taxon>Actinomycetota</taxon>
        <taxon>Actinomycetes</taxon>
        <taxon>Mycobacteriales</taxon>
        <taxon>Mycobacteriaceae</taxon>
        <taxon>Mycolicibacterium</taxon>
    </lineage>
</organism>
<gene>
    <name type="primary">mtf2</name>
    <name type="ordered locus">MSMEI_0386</name>
    <name type="ordered locus">MSMEG_0393</name>
</gene>
<accession>Q9RMN9</accession>
<accession>A0QPG8</accession>
<accession>Q2YHH6</accession>
<comment type="function">
    <text evidence="1">O-methyltransferase that modifies the hydroxy group of the fatty acids. Oleate is the most effective fatty acid acceptor.</text>
</comment>
<comment type="catalytic activity">
    <reaction>
        <text>a fatty acid + S-adenosyl-L-methionine = a fatty acid methyl ester + S-adenosyl-L-homocysteine</text>
        <dbReference type="Rhea" id="RHEA:23012"/>
        <dbReference type="ChEBI" id="CHEBI:4986"/>
        <dbReference type="ChEBI" id="CHEBI:28868"/>
        <dbReference type="ChEBI" id="CHEBI:57856"/>
        <dbReference type="ChEBI" id="CHEBI:59789"/>
        <dbReference type="EC" id="2.1.1.15"/>
    </reaction>
</comment>
<comment type="disruption phenotype">
    <text evidence="1">Cells are unable to methylate the glycopeptidolipid fatty acids.</text>
</comment>
<comment type="similarity">
    <text evidence="2">Belongs to the methyltransferase superfamily.</text>
</comment>
<comment type="sequence caution" evidence="2">
    <conflict type="erroneous initiation">
        <sequence resource="EMBL-CDS" id="ABK70254"/>
    </conflict>
    <text>Truncated N-terminus.</text>
</comment>
<protein>
    <recommendedName>
        <fullName>Fatty-acid O-methyltransferase</fullName>
        <shortName>fmt</shortName>
        <ecNumber>2.1.1.15</ecNumber>
    </recommendedName>
</protein>
<proteinExistence type="inferred from homology"/>
<keyword id="KW-0489">Methyltransferase</keyword>
<keyword id="KW-1185">Reference proteome</keyword>
<keyword id="KW-0808">Transferase</keyword>
<name>MTF2_MYCS2</name>
<reference key="1">
    <citation type="journal article" date="2002" name="Microbiology">
        <title>Modification of glycopeptidolipids by an O-methyltransferase of Mycobacterium smegmatis.</title>
        <authorList>
            <person name="Jeevarajah D."/>
            <person name="Patterson J.H."/>
            <person name="McConville M.J."/>
            <person name="Billman-Jacobe H."/>
        </authorList>
    </citation>
    <scope>NUCLEOTIDE SEQUENCE [GENOMIC DNA]</scope>
    <scope>FUNCTION</scope>
    <scope>DISRUPTION PHENOTYPE</scope>
    <source>
        <strain>ATCC 700084 / mc(2)155</strain>
    </source>
</reference>
<reference key="2">
    <citation type="journal article" date="2005" name="Mol. Microbiol.">
        <title>Gap, a mycobacterial specific integral membrane protein, is required for glycolipid transport to the cell surface.</title>
        <authorList>
            <person name="Sonden B."/>
            <person name="Kocincova D."/>
            <person name="Deshayes C."/>
            <person name="Euphrasie D."/>
            <person name="Rhayat L."/>
            <person name="Laval F."/>
            <person name="Frehel C."/>
            <person name="Daffe M."/>
            <person name="Etienne G."/>
            <person name="Reyrat J.M."/>
        </authorList>
    </citation>
    <scope>NUCLEOTIDE SEQUENCE [GENOMIC DNA]</scope>
</reference>
<reference key="3">
    <citation type="submission" date="2006-10" db="EMBL/GenBank/DDBJ databases">
        <authorList>
            <person name="Fleischmann R.D."/>
            <person name="Dodson R.J."/>
            <person name="Haft D.H."/>
            <person name="Merkel J.S."/>
            <person name="Nelson W.C."/>
            <person name="Fraser C.M."/>
        </authorList>
    </citation>
    <scope>NUCLEOTIDE SEQUENCE [LARGE SCALE GENOMIC DNA]</scope>
    <source>
        <strain>ATCC 700084 / mc(2)155</strain>
    </source>
</reference>
<reference key="4">
    <citation type="journal article" date="2007" name="Genome Biol.">
        <title>Interrupted coding sequences in Mycobacterium smegmatis: authentic mutations or sequencing errors?</title>
        <authorList>
            <person name="Deshayes C."/>
            <person name="Perrodou E."/>
            <person name="Gallien S."/>
            <person name="Euphrasie D."/>
            <person name="Schaeffer C."/>
            <person name="Van-Dorsselaer A."/>
            <person name="Poch O."/>
            <person name="Lecompte O."/>
            <person name="Reyrat J.-M."/>
        </authorList>
    </citation>
    <scope>NUCLEOTIDE SEQUENCE [LARGE SCALE GENOMIC DNA]</scope>
    <source>
        <strain>ATCC 700084 / mc(2)155</strain>
    </source>
</reference>
<reference key="5">
    <citation type="journal article" date="2009" name="Genome Res.">
        <title>Ortho-proteogenomics: multiple proteomes investigation through orthology and a new MS-based protocol.</title>
        <authorList>
            <person name="Gallien S."/>
            <person name="Perrodou E."/>
            <person name="Carapito C."/>
            <person name="Deshayes C."/>
            <person name="Reyrat J.-M."/>
            <person name="Van Dorsselaer A."/>
            <person name="Poch O."/>
            <person name="Schaeffer C."/>
            <person name="Lecompte O."/>
        </authorList>
    </citation>
    <scope>NUCLEOTIDE SEQUENCE [LARGE SCALE GENOMIC DNA]</scope>
    <source>
        <strain>ATCC 700084 / mc(2)155</strain>
    </source>
</reference>
<reference key="6">
    <citation type="journal article" date="2014" name="PLoS ONE">
        <title>Finding sequences for over 270 orphan enzymes.</title>
        <authorList>
            <person name="Shearer A.G."/>
            <person name="Altman T."/>
            <person name="Rhee C.D."/>
        </authorList>
    </citation>
    <scope>IDENTIFICATION</scope>
</reference>
<evidence type="ECO:0000269" key="1">
    <source>
    </source>
</evidence>
<evidence type="ECO:0000305" key="2"/>
<dbReference type="EC" id="2.1.1.15"/>
<dbReference type="EMBL" id="AY138899">
    <property type="protein sequence ID" value="AAF05995.1"/>
    <property type="molecule type" value="Genomic_DNA"/>
</dbReference>
<dbReference type="EMBL" id="AY439015">
    <property type="protein sequence ID" value="ABB72073.1"/>
    <property type="molecule type" value="Genomic_DNA"/>
</dbReference>
<dbReference type="EMBL" id="CP000480">
    <property type="protein sequence ID" value="ABK70254.1"/>
    <property type="status" value="ALT_INIT"/>
    <property type="molecule type" value="Genomic_DNA"/>
</dbReference>
<dbReference type="EMBL" id="CP001663">
    <property type="protein sequence ID" value="AFP36867.1"/>
    <property type="molecule type" value="Genomic_DNA"/>
</dbReference>
<dbReference type="RefSeq" id="WP_014876764.1">
    <property type="nucleotide sequence ID" value="NZ_SIJM01000018.1"/>
</dbReference>
<dbReference type="RefSeq" id="YP_884806.1">
    <property type="nucleotide sequence ID" value="NC_008596.1"/>
</dbReference>
<dbReference type="SMR" id="Q9RMN9"/>
<dbReference type="STRING" id="246196.MSMEG_0393"/>
<dbReference type="PaxDb" id="246196-MSMEI_0386"/>
<dbReference type="KEGG" id="msg:MSMEI_0386"/>
<dbReference type="KEGG" id="msm:MSMEG_0393"/>
<dbReference type="PATRIC" id="fig|246196.19.peg.390"/>
<dbReference type="eggNOG" id="COG2226">
    <property type="taxonomic scope" value="Bacteria"/>
</dbReference>
<dbReference type="OrthoDB" id="9769602at2"/>
<dbReference type="Proteomes" id="UP000000757">
    <property type="component" value="Chromosome"/>
</dbReference>
<dbReference type="Proteomes" id="UP000006158">
    <property type="component" value="Chromosome"/>
</dbReference>
<dbReference type="GO" id="GO:0030733">
    <property type="term" value="F:fatty acid O-methyltransferase activity"/>
    <property type="evidence" value="ECO:0007669"/>
    <property type="project" value="UniProtKB-EC"/>
</dbReference>
<dbReference type="GO" id="GO:0032259">
    <property type="term" value="P:methylation"/>
    <property type="evidence" value="ECO:0007669"/>
    <property type="project" value="UniProtKB-KW"/>
</dbReference>
<dbReference type="CDD" id="cd02440">
    <property type="entry name" value="AdoMet_MTases"/>
    <property type="match status" value="1"/>
</dbReference>
<dbReference type="Gene3D" id="3.40.50.150">
    <property type="entry name" value="Vaccinia Virus protein VP39"/>
    <property type="match status" value="1"/>
</dbReference>
<dbReference type="InterPro" id="IPR050447">
    <property type="entry name" value="Erg6_SMT_methyltransf"/>
</dbReference>
<dbReference type="InterPro" id="IPR054916">
    <property type="entry name" value="FAmtase_mtf2"/>
</dbReference>
<dbReference type="InterPro" id="IPR013216">
    <property type="entry name" value="Methyltransf_11"/>
</dbReference>
<dbReference type="InterPro" id="IPR054877">
    <property type="entry name" value="PthPhpthDimycoMt"/>
</dbReference>
<dbReference type="InterPro" id="IPR029063">
    <property type="entry name" value="SAM-dependent_MTases_sf"/>
</dbReference>
<dbReference type="NCBIfam" id="NF045825">
    <property type="entry name" value="FAmtase_mtf2"/>
    <property type="match status" value="1"/>
</dbReference>
<dbReference type="NCBIfam" id="NF045823">
    <property type="entry name" value="PthPhpthDimycoMt"/>
    <property type="match status" value="1"/>
</dbReference>
<dbReference type="PANTHER" id="PTHR44068:SF11">
    <property type="entry name" value="GERANYL DIPHOSPHATE 2-C-METHYLTRANSFERASE"/>
    <property type="match status" value="1"/>
</dbReference>
<dbReference type="PANTHER" id="PTHR44068">
    <property type="entry name" value="ZGC:194242"/>
    <property type="match status" value="1"/>
</dbReference>
<dbReference type="Pfam" id="PF08241">
    <property type="entry name" value="Methyltransf_11"/>
    <property type="match status" value="1"/>
</dbReference>
<dbReference type="SUPFAM" id="SSF53335">
    <property type="entry name" value="S-adenosyl-L-methionine-dependent methyltransferases"/>
    <property type="match status" value="1"/>
</dbReference>